<sequence>MDNLDEDDLAFFSKPIKKPPLNYAKQLIASSSDSEEESELDTNKQALEHINAQKNITHNENKSAEPLSRQSTILDADEGNQDVSDTTPNACLNEGRHSPKSAISCVTQPVSPVYNTRAAANLRNNSINSEAALSTTSSLLDDDFARRLEEIDRQVQEFEKSSSDMDVQIHTHKREIEEDDDNTSADVPLLKHSKSDHSTLYHSKSEFSTNEPVISVVLQLAVIGQRIPNSNISLPRDWEAPLFFKVKSNQQFRRVRIAYSERKKVDNVVLVFQNQRLWDYGTPKGAGMLKVDTRLVVHAYCHSDFISLKRIKELEVEKLSSVTEDSTAQTCKLITLLLRSSKSEDLRLSIPVDFTVKDLIKRYCTEVKISFHERIRLEFEGEWLDPNDQVQSTELEDEDQVSVVLD</sequence>
<gene>
    <name type="primary">rad60</name>
    <name type="ORF">SPBC1921.02</name>
</gene>
<feature type="chain" id="PRO_0000097154" description="DNA repair protein rad60">
    <location>
        <begin position="1"/>
        <end position="406"/>
    </location>
</feature>
<feature type="strand" evidence="4">
    <location>
        <begin position="333"/>
        <end position="343"/>
    </location>
</feature>
<feature type="strand" evidence="4">
    <location>
        <begin position="346"/>
        <end position="351"/>
    </location>
</feature>
<feature type="helix" evidence="4">
    <location>
        <begin position="356"/>
        <end position="367"/>
    </location>
</feature>
<feature type="strand" evidence="4">
    <location>
        <begin position="376"/>
        <end position="379"/>
    </location>
</feature>
<feature type="helix" evidence="4">
    <location>
        <begin position="390"/>
        <end position="392"/>
    </location>
</feature>
<feature type="strand" evidence="4">
    <location>
        <begin position="400"/>
        <end position="404"/>
    </location>
</feature>
<comment type="function">
    <text evidence="1 2">Required for repair of DNA double strand breaks which occur during replication, or induced by UV or gamma radiation, via recombination between sister chromatids. This has a subsequent role in the maintenance of chromosome structure. May work in conjunction with the Smc5-Smc6 complex.</text>
</comment>
<comment type="subunit">
    <text evidence="2 3">Interacts with rfp1 and smc5.</text>
</comment>
<comment type="interaction">
    <interactant intactId="EBI-3650521">
        <id>Q9USX3</id>
    </interactant>
    <interactant intactId="EBI-966468">
        <id>P40984</id>
        <label>hus5</label>
    </interactant>
    <organismsDiffer>false</organismsDiffer>
    <experiments>2</experiments>
</comment>
<comment type="interaction">
    <interactant intactId="EBI-3650521">
        <id>Q9USX3</id>
    </interactant>
    <interactant intactId="EBI-603756">
        <id>O13710</id>
        <label>smc5</label>
    </interactant>
    <organismsDiffer>false</organismsDiffer>
    <experiments>2</experiments>
</comment>
<comment type="subcellular location">
    <subcellularLocation>
        <location evidence="1">Nucleus</location>
    </subcellularLocation>
</comment>
<comment type="PTM">
    <text evidence="2">Phosphorylated by cds1.</text>
</comment>
<reference key="1">
    <citation type="journal article" date="2002" name="Mol. Cell. Biol.">
        <title>The Schizosaccharomyces pombe rad60 gene is essential for repairing double-strand DNA breaks spontaneously occurring during replication and induced by DNA damaging agents.</title>
        <authorList>
            <person name="Morishita T."/>
            <person name="Tsutsui Y."/>
            <person name="Iwasaki H."/>
            <person name="Shinagawa H."/>
        </authorList>
    </citation>
    <scope>NUCLEOTIDE SEQUENCE [GENOMIC DNA]</scope>
    <scope>FUNCTION</scope>
    <scope>SUBCELLULAR LOCATION</scope>
</reference>
<reference key="2">
    <citation type="journal article" date="2002" name="Nature">
        <title>The genome sequence of Schizosaccharomyces pombe.</title>
        <authorList>
            <person name="Wood V."/>
            <person name="Gwilliam R."/>
            <person name="Rajandream M.A."/>
            <person name="Lyne M.H."/>
            <person name="Lyne R."/>
            <person name="Stewart A."/>
            <person name="Sgouros J.G."/>
            <person name="Peat N."/>
            <person name="Hayles J."/>
            <person name="Baker S.G."/>
            <person name="Basham D."/>
            <person name="Bowman S."/>
            <person name="Brooks K."/>
            <person name="Brown D."/>
            <person name="Brown S."/>
            <person name="Chillingworth T."/>
            <person name="Churcher C.M."/>
            <person name="Collins M."/>
            <person name="Connor R."/>
            <person name="Cronin A."/>
            <person name="Davis P."/>
            <person name="Feltwell T."/>
            <person name="Fraser A."/>
            <person name="Gentles S."/>
            <person name="Goble A."/>
            <person name="Hamlin N."/>
            <person name="Harris D.E."/>
            <person name="Hidalgo J."/>
            <person name="Hodgson G."/>
            <person name="Holroyd S."/>
            <person name="Hornsby T."/>
            <person name="Howarth S."/>
            <person name="Huckle E.J."/>
            <person name="Hunt S."/>
            <person name="Jagels K."/>
            <person name="James K.D."/>
            <person name="Jones L."/>
            <person name="Jones M."/>
            <person name="Leather S."/>
            <person name="McDonald S."/>
            <person name="McLean J."/>
            <person name="Mooney P."/>
            <person name="Moule S."/>
            <person name="Mungall K.L."/>
            <person name="Murphy L.D."/>
            <person name="Niblett D."/>
            <person name="Odell C."/>
            <person name="Oliver K."/>
            <person name="O'Neil S."/>
            <person name="Pearson D."/>
            <person name="Quail M.A."/>
            <person name="Rabbinowitsch E."/>
            <person name="Rutherford K.M."/>
            <person name="Rutter S."/>
            <person name="Saunders D."/>
            <person name="Seeger K."/>
            <person name="Sharp S."/>
            <person name="Skelton J."/>
            <person name="Simmonds M.N."/>
            <person name="Squares R."/>
            <person name="Squares S."/>
            <person name="Stevens K."/>
            <person name="Taylor K."/>
            <person name="Taylor R.G."/>
            <person name="Tivey A."/>
            <person name="Walsh S.V."/>
            <person name="Warren T."/>
            <person name="Whitehead S."/>
            <person name="Woodward J.R."/>
            <person name="Volckaert G."/>
            <person name="Aert R."/>
            <person name="Robben J."/>
            <person name="Grymonprez B."/>
            <person name="Weltjens I."/>
            <person name="Vanstreels E."/>
            <person name="Rieger M."/>
            <person name="Schaefer M."/>
            <person name="Mueller-Auer S."/>
            <person name="Gabel C."/>
            <person name="Fuchs M."/>
            <person name="Duesterhoeft A."/>
            <person name="Fritzc C."/>
            <person name="Holzer E."/>
            <person name="Moestl D."/>
            <person name="Hilbert H."/>
            <person name="Borzym K."/>
            <person name="Langer I."/>
            <person name="Beck A."/>
            <person name="Lehrach H."/>
            <person name="Reinhardt R."/>
            <person name="Pohl T.M."/>
            <person name="Eger P."/>
            <person name="Zimmermann W."/>
            <person name="Wedler H."/>
            <person name="Wambutt R."/>
            <person name="Purnelle B."/>
            <person name="Goffeau A."/>
            <person name="Cadieu E."/>
            <person name="Dreano S."/>
            <person name="Gloux S."/>
            <person name="Lelaure V."/>
            <person name="Mottier S."/>
            <person name="Galibert F."/>
            <person name="Aves S.J."/>
            <person name="Xiang Z."/>
            <person name="Hunt C."/>
            <person name="Moore K."/>
            <person name="Hurst S.M."/>
            <person name="Lucas M."/>
            <person name="Rochet M."/>
            <person name="Gaillardin C."/>
            <person name="Tallada V.A."/>
            <person name="Garzon A."/>
            <person name="Thode G."/>
            <person name="Daga R.R."/>
            <person name="Cruzado L."/>
            <person name="Jimenez J."/>
            <person name="Sanchez M."/>
            <person name="del Rey F."/>
            <person name="Benito J."/>
            <person name="Dominguez A."/>
            <person name="Revuelta J.L."/>
            <person name="Moreno S."/>
            <person name="Armstrong J."/>
            <person name="Forsburg S.L."/>
            <person name="Cerutti L."/>
            <person name="Lowe T."/>
            <person name="McCombie W.R."/>
            <person name="Paulsen I."/>
            <person name="Potashkin J."/>
            <person name="Shpakovski G.V."/>
            <person name="Ussery D."/>
            <person name="Barrell B.G."/>
            <person name="Nurse P."/>
        </authorList>
    </citation>
    <scope>NUCLEOTIDE SEQUENCE [LARGE SCALE GENOMIC DNA]</scope>
    <source>
        <strain>972 / ATCC 24843</strain>
    </source>
</reference>
<reference key="3">
    <citation type="journal article" date="2003" name="Mol. Cell. Biol.">
        <title>Replication checkpoint kinase Cds1 regulates recombinational repair protein Rad60.</title>
        <authorList>
            <person name="Boddy M.N."/>
            <person name="Shanahan P."/>
            <person name="McDonald W.H."/>
            <person name="Lopez-Girona A."/>
            <person name="Noguchi E."/>
            <person name="Yates J.R. III"/>
            <person name="Russell P."/>
        </authorList>
    </citation>
    <scope>FUNCTION</scope>
    <scope>INTERACTION WITH SMC5</scope>
    <scope>PHOSPHORYLATION BY CDS1</scope>
</reference>
<reference key="4">
    <citation type="journal article" date="2007" name="J. Biol. Chem.">
        <title>Fission yeast Rnf4 homologs are required for DNA repair.</title>
        <authorList>
            <person name="Kosoy A."/>
            <person name="Calonge T.M."/>
            <person name="Outwin E.A."/>
            <person name="O'Connell M.J."/>
        </authorList>
    </citation>
    <scope>INTERACTION WITH RFP1</scope>
</reference>
<protein>
    <recommendedName>
        <fullName>DNA repair protein rad60</fullName>
    </recommendedName>
</protein>
<accession>Q9USX3</accession>
<proteinExistence type="evidence at protein level"/>
<name>RAD60_SCHPO</name>
<evidence type="ECO:0000269" key="1">
    <source>
    </source>
</evidence>
<evidence type="ECO:0000269" key="2">
    <source>
    </source>
</evidence>
<evidence type="ECO:0000269" key="3">
    <source>
    </source>
</evidence>
<evidence type="ECO:0007829" key="4">
    <source>
        <dbReference type="PDB" id="3GOE"/>
    </source>
</evidence>
<organism>
    <name type="scientific">Schizosaccharomyces pombe (strain 972 / ATCC 24843)</name>
    <name type="common">Fission yeast</name>
    <dbReference type="NCBI Taxonomy" id="284812"/>
    <lineage>
        <taxon>Eukaryota</taxon>
        <taxon>Fungi</taxon>
        <taxon>Dikarya</taxon>
        <taxon>Ascomycota</taxon>
        <taxon>Taphrinomycotina</taxon>
        <taxon>Schizosaccharomycetes</taxon>
        <taxon>Schizosaccharomycetales</taxon>
        <taxon>Schizosaccharomycetaceae</taxon>
        <taxon>Schizosaccharomyces</taxon>
    </lineage>
</organism>
<dbReference type="EMBL" id="CU329671">
    <property type="protein sequence ID" value="CAB58968.1"/>
    <property type="molecule type" value="Genomic_DNA"/>
</dbReference>
<dbReference type="EMBL" id="AB089814">
    <property type="protein sequence ID" value="BAC07534.1"/>
    <property type="molecule type" value="Genomic_DNA"/>
</dbReference>
<dbReference type="PIR" id="T39786">
    <property type="entry name" value="T39786"/>
</dbReference>
<dbReference type="RefSeq" id="NP_595995.1">
    <property type="nucleotide sequence ID" value="NM_001021903.2"/>
</dbReference>
<dbReference type="PDB" id="3GOE">
    <property type="method" value="X-ray"/>
    <property type="resolution" value="0.97 A"/>
    <property type="chains" value="A=332-406"/>
</dbReference>
<dbReference type="PDB" id="3RCZ">
    <property type="method" value="X-ray"/>
    <property type="resolution" value="1.90 A"/>
    <property type="chains" value="A=332-406"/>
</dbReference>
<dbReference type="PDBsum" id="3GOE"/>
<dbReference type="PDBsum" id="3RCZ"/>
<dbReference type="SMR" id="Q9USX3"/>
<dbReference type="BioGRID" id="277321">
    <property type="interactions" value="22"/>
</dbReference>
<dbReference type="DIP" id="DIP-44205N"/>
<dbReference type="FunCoup" id="Q9USX3">
    <property type="interactions" value="8"/>
</dbReference>
<dbReference type="IntAct" id="Q9USX3">
    <property type="interactions" value="8"/>
</dbReference>
<dbReference type="MINT" id="Q9USX3"/>
<dbReference type="STRING" id="284812.Q9USX3"/>
<dbReference type="iPTMnet" id="Q9USX3"/>
<dbReference type="PaxDb" id="4896-SPBC1921.02.1"/>
<dbReference type="EnsemblFungi" id="SPBC1921.02.1">
    <property type="protein sequence ID" value="SPBC1921.02.1:pep"/>
    <property type="gene ID" value="SPBC1921.02"/>
</dbReference>
<dbReference type="GeneID" id="2540802"/>
<dbReference type="KEGG" id="spo:2540802"/>
<dbReference type="PomBase" id="SPBC1921.02">
    <property type="gene designation" value="rad60"/>
</dbReference>
<dbReference type="VEuPathDB" id="FungiDB:SPBC1921.02"/>
<dbReference type="eggNOG" id="ENOG502SBJ2">
    <property type="taxonomic scope" value="Eukaryota"/>
</dbReference>
<dbReference type="HOGENOM" id="CLU_685422_0_0_1"/>
<dbReference type="InParanoid" id="Q9USX3"/>
<dbReference type="OMA" id="WDFGTPK"/>
<dbReference type="EvolutionaryTrace" id="Q9USX3"/>
<dbReference type="PRO" id="PR:Q9USX3"/>
<dbReference type="Proteomes" id="UP000002485">
    <property type="component" value="Chromosome II"/>
</dbReference>
<dbReference type="GO" id="GO:0005634">
    <property type="term" value="C:nucleus"/>
    <property type="evidence" value="ECO:0000314"/>
    <property type="project" value="PomBase"/>
</dbReference>
<dbReference type="GO" id="GO:0180016">
    <property type="term" value="F:SUMO ligase regulator activity"/>
    <property type="evidence" value="ECO:0000269"/>
    <property type="project" value="PomBase"/>
</dbReference>
<dbReference type="GO" id="GO:0000724">
    <property type="term" value="P:double-strand break repair via homologous recombination"/>
    <property type="evidence" value="ECO:0000316"/>
    <property type="project" value="PomBase"/>
</dbReference>
<dbReference type="GO" id="GO:0031297">
    <property type="term" value="P:replication fork processing"/>
    <property type="evidence" value="ECO:0000315"/>
    <property type="project" value="PomBase"/>
</dbReference>
<dbReference type="CDD" id="cd17080">
    <property type="entry name" value="Ubl_SLD2_Esc2_like"/>
    <property type="match status" value="1"/>
</dbReference>
<dbReference type="Gene3D" id="3.10.20.90">
    <property type="entry name" value="Phosphatidylinositol 3-kinase Catalytic Subunit, Chain A, domain 1"/>
    <property type="match status" value="2"/>
</dbReference>
<dbReference type="InterPro" id="IPR022617">
    <property type="entry name" value="Rad60/SUMO-like_dom"/>
</dbReference>
<dbReference type="InterPro" id="IPR000626">
    <property type="entry name" value="Ubiquitin-like_dom"/>
</dbReference>
<dbReference type="InterPro" id="IPR029071">
    <property type="entry name" value="Ubiquitin-like_domsf"/>
</dbReference>
<dbReference type="PANTHER" id="PTHR10562">
    <property type="entry name" value="SMALL UBIQUITIN-RELATED MODIFIER"/>
    <property type="match status" value="1"/>
</dbReference>
<dbReference type="Pfam" id="PF11976">
    <property type="entry name" value="Rad60-SLD"/>
    <property type="match status" value="1"/>
</dbReference>
<dbReference type="SUPFAM" id="SSF54236">
    <property type="entry name" value="Ubiquitin-like"/>
    <property type="match status" value="2"/>
</dbReference>
<keyword id="KW-0002">3D-structure</keyword>
<keyword id="KW-0227">DNA damage</keyword>
<keyword id="KW-0233">DNA recombination</keyword>
<keyword id="KW-0234">DNA repair</keyword>
<keyword id="KW-0539">Nucleus</keyword>
<keyword id="KW-0597">Phosphoprotein</keyword>
<keyword id="KW-1185">Reference proteome</keyword>